<comment type="function">
    <text evidence="3 6">Polyprenyl transferase; part of the gene cluster that mediates the biosynthesis of the diterpenoid pyrones higginsianins A and B (PubMed:32286350). The first step of the pathway is the synthesis of the alpha-pyrone moiety by the polyketide synthase dpchA via condensation of one acetyl-CoA starter unit with 3 malonyl-CoA units and 2 methylations (Probable). The alpha-pyrone is then combined with geranylgeranyl pyrophosphate (GGPP) formed by the GGPP synthase dpchD through the action of the prenyltransferase dpchC to yield a linear alpha-pyrone diterpenoid (Probable). Subsequent steps in the diterpenoid pyrone biosynthetic pathway involve the decalin core formation, which is initiated by the epoxidation of the C10-C11 olefin by the FAD-dependent oxidoreductase dpchE, and is followed by a cyclization cascade catalyzed by the terpene cyclase dpchB (Probable). The short chain dehydrogenase/reductase dpchG then oxidizes the 8S hydroxy group to a ketone and the short chain dehydrogenase/reductase dpchH reduces the ketone to the 8R hydroxy group to yield higginsianin B (PubMed:32286350). Finally, the FAD-dependent oxidoreductase dpchF converts higginsianin B into higginsianin A (PubMed:32286350).</text>
</comment>
<comment type="cofactor">
    <cofactor evidence="1">
        <name>Mg(2+)</name>
        <dbReference type="ChEBI" id="CHEBI:18420"/>
    </cofactor>
</comment>
<comment type="pathway">
    <text evidence="6">Secondary metabolite biosynthesis; terpenoid biosynthesis.</text>
</comment>
<comment type="subcellular location">
    <subcellularLocation>
        <location evidence="2">Membrane</location>
        <topology evidence="2">Multi-pass membrane protein</topology>
    </subcellularLocation>
</comment>
<comment type="biotechnology">
    <text evidence="3">Diterpenoid pyrones display various biological activities and higginsianin A shows anti-HIV activity.</text>
</comment>
<comment type="similarity">
    <text evidence="5">Belongs to the UbiA prenyltransferase family.</text>
</comment>
<comment type="sequence caution" evidence="5">
    <conflict type="erroneous gene model prediction">
        <sequence resource="EMBL" id="CACQ02005368"/>
    </conflict>
</comment>
<name>DPCHC_COLHI</name>
<dbReference type="EC" id="2.5.1.-" evidence="6"/>
<dbReference type="EMBL" id="LTAN01000004">
    <property type="protein sequence ID" value="OBR09786.1"/>
    <property type="molecule type" value="Genomic_DNA"/>
</dbReference>
<dbReference type="EMBL" id="CACQ02005368">
    <property type="status" value="NOT_ANNOTATED_CDS"/>
    <property type="molecule type" value="Genomic_DNA"/>
</dbReference>
<dbReference type="RefSeq" id="XP_018158303.1">
    <property type="nucleotide sequence ID" value="XM_018300453.1"/>
</dbReference>
<dbReference type="SMR" id="A0A1B7YCK2"/>
<dbReference type="STRING" id="759273.H1VQB3"/>
<dbReference type="EnsemblFungi" id="CCF42419">
    <property type="protein sequence ID" value="CCF42419"/>
    <property type="gene ID" value="CH063_02830"/>
</dbReference>
<dbReference type="GeneID" id="28864560"/>
<dbReference type="KEGG" id="chig:CH63R_05478"/>
<dbReference type="VEuPathDB" id="FungiDB:CH63R_05478"/>
<dbReference type="eggNOG" id="KOG1381">
    <property type="taxonomic scope" value="Eukaryota"/>
</dbReference>
<dbReference type="HOGENOM" id="CLU_075330_0_0_1"/>
<dbReference type="OrthoDB" id="24941at1028384"/>
<dbReference type="UniPathway" id="UPA00213"/>
<dbReference type="Proteomes" id="UP000007174">
    <property type="component" value="Unassembled WGS sequence"/>
</dbReference>
<dbReference type="Proteomes" id="UP000092177">
    <property type="component" value="Chromosome 4"/>
</dbReference>
<dbReference type="GO" id="GO:0005886">
    <property type="term" value="C:plasma membrane"/>
    <property type="evidence" value="ECO:0007669"/>
    <property type="project" value="TreeGrafter"/>
</dbReference>
<dbReference type="GO" id="GO:0016765">
    <property type="term" value="F:transferase activity, transferring alkyl or aryl (other than methyl) groups"/>
    <property type="evidence" value="ECO:0007669"/>
    <property type="project" value="InterPro"/>
</dbReference>
<dbReference type="GO" id="GO:0016114">
    <property type="term" value="P:terpenoid biosynthetic process"/>
    <property type="evidence" value="ECO:0007669"/>
    <property type="project" value="UniProtKB-UniPathway"/>
</dbReference>
<dbReference type="CDD" id="cd13959">
    <property type="entry name" value="PT_UbiA_COQ2"/>
    <property type="match status" value="1"/>
</dbReference>
<dbReference type="FunFam" id="1.10.357.140:FF:000008">
    <property type="entry name" value="4-hydroxybenzoate octaprenyltransferase"/>
    <property type="match status" value="1"/>
</dbReference>
<dbReference type="FunFam" id="1.20.120.1780:FF:000001">
    <property type="entry name" value="4-hydroxybenzoate octaprenyltransferase"/>
    <property type="match status" value="1"/>
</dbReference>
<dbReference type="Gene3D" id="1.10.357.140">
    <property type="entry name" value="UbiA prenyltransferase"/>
    <property type="match status" value="1"/>
</dbReference>
<dbReference type="Gene3D" id="1.20.120.1780">
    <property type="entry name" value="UbiA prenyltransferase"/>
    <property type="match status" value="1"/>
</dbReference>
<dbReference type="InterPro" id="IPR039653">
    <property type="entry name" value="Prenyltransferase"/>
</dbReference>
<dbReference type="InterPro" id="IPR000537">
    <property type="entry name" value="UbiA_prenyltransferase"/>
</dbReference>
<dbReference type="InterPro" id="IPR030470">
    <property type="entry name" value="UbiA_prenylTrfase_CS"/>
</dbReference>
<dbReference type="InterPro" id="IPR044878">
    <property type="entry name" value="UbiA_sf"/>
</dbReference>
<dbReference type="PANTHER" id="PTHR11048:SF28">
    <property type="entry name" value="4-HYDROXYBENZOATE POLYPRENYLTRANSFERASE, MITOCHONDRIAL"/>
    <property type="match status" value="1"/>
</dbReference>
<dbReference type="PANTHER" id="PTHR11048">
    <property type="entry name" value="PRENYLTRANSFERASES"/>
    <property type="match status" value="1"/>
</dbReference>
<dbReference type="Pfam" id="PF01040">
    <property type="entry name" value="UbiA"/>
    <property type="match status" value="1"/>
</dbReference>
<dbReference type="PROSITE" id="PS00943">
    <property type="entry name" value="UBIA"/>
    <property type="match status" value="1"/>
</dbReference>
<gene>
    <name evidence="4" type="primary">dpchC</name>
    <name type="ORF">CH063_02830</name>
    <name type="ORF">CH63R_05478</name>
</gene>
<reference key="1">
    <citation type="journal article" date="2012" name="Nat. Genet.">
        <title>Lifestyle transitions in plant pathogenic Colletotrichum fungi deciphered by genome and transcriptome analyses.</title>
        <authorList>
            <person name="O'Connell R.J."/>
            <person name="Thon M.R."/>
            <person name="Hacquard S."/>
            <person name="Amyotte S.G."/>
            <person name="Kleemann J."/>
            <person name="Torres M.F."/>
            <person name="Damm U."/>
            <person name="Buiate E.A."/>
            <person name="Epstein L."/>
            <person name="Alkan N."/>
            <person name="Altmueller J."/>
            <person name="Alvarado-Balderrama L."/>
            <person name="Bauser C.A."/>
            <person name="Becker C."/>
            <person name="Birren B.W."/>
            <person name="Chen Z."/>
            <person name="Choi J."/>
            <person name="Crouch J.A."/>
            <person name="Duvick J.P."/>
            <person name="Farman M.A."/>
            <person name="Gan P."/>
            <person name="Heiman D."/>
            <person name="Henrissat B."/>
            <person name="Howard R.J."/>
            <person name="Kabbage M."/>
            <person name="Koch C."/>
            <person name="Kracher B."/>
            <person name="Kubo Y."/>
            <person name="Law A.D."/>
            <person name="Lebrun M.-H."/>
            <person name="Lee Y.-H."/>
            <person name="Miyara I."/>
            <person name="Moore N."/>
            <person name="Neumann U."/>
            <person name="Nordstroem K."/>
            <person name="Panaccione D.G."/>
            <person name="Panstruga R."/>
            <person name="Place M."/>
            <person name="Proctor R.H."/>
            <person name="Prusky D."/>
            <person name="Rech G."/>
            <person name="Reinhardt R."/>
            <person name="Rollins J.A."/>
            <person name="Rounsley S."/>
            <person name="Schardl C.L."/>
            <person name="Schwartz D.C."/>
            <person name="Shenoy N."/>
            <person name="Shirasu K."/>
            <person name="Sikhakolli U.R."/>
            <person name="Stueber K."/>
            <person name="Sukno S.A."/>
            <person name="Sweigard J.A."/>
            <person name="Takano Y."/>
            <person name="Takahara H."/>
            <person name="Trail F."/>
            <person name="van der Does H.C."/>
            <person name="Voll L.M."/>
            <person name="Will I."/>
            <person name="Young S."/>
            <person name="Zeng Q."/>
            <person name="Zhang J."/>
            <person name="Zhou S."/>
            <person name="Dickman M.B."/>
            <person name="Schulze-Lefert P."/>
            <person name="Ver Loren van Themaat E."/>
            <person name="Ma L.-J."/>
            <person name="Vaillancourt L.J."/>
        </authorList>
    </citation>
    <scope>NUCLEOTIDE SEQUENCE [LARGE SCALE GENOMIC DNA]</scope>
    <source>
        <strain>IMI 349063</strain>
    </source>
</reference>
<reference key="2">
    <citation type="journal article" date="2017" name="BMC Genomics">
        <title>Gapless genome assembly of Colletotrichum higginsianum reveals chromosome structure and association of transposable elements with secondary metabolite gene clusters.</title>
        <authorList>
            <person name="Dallery J.-F."/>
            <person name="Lapalu N."/>
            <person name="Zampounis A."/>
            <person name="Pigne S."/>
            <person name="Luyten I."/>
            <person name="Amselem J."/>
            <person name="Wittenberg A.H.J."/>
            <person name="Zhou S."/>
            <person name="de Queiroz M.V."/>
            <person name="Robin G.P."/>
            <person name="Auger A."/>
            <person name="Hainaut M."/>
            <person name="Henrissat B."/>
            <person name="Kim K.-T."/>
            <person name="Lee Y.-H."/>
            <person name="Lespinet O."/>
            <person name="Schwartz D.C."/>
            <person name="Thon M.R."/>
            <person name="O'Connell R.J."/>
        </authorList>
    </citation>
    <scope>NUCLEOTIDE SEQUENCE [LARGE SCALE GENOMIC DNA]</scope>
    <scope>GENOME REANNOTATION</scope>
    <source>
        <strain>IMI 349063</strain>
    </source>
</reference>
<reference key="3">
    <citation type="journal article" date="2020" name="Nat. Commun.">
        <title>Synthetic biology based construction of biological activity-related library of fungal decalin-containing diterpenoid pyrones.</title>
        <authorList>
            <person name="Tsukada K."/>
            <person name="Shinki S."/>
            <person name="Kaneko A."/>
            <person name="Murakami K."/>
            <person name="Irie K."/>
            <person name="Murai M."/>
            <person name="Miyoshi H."/>
            <person name="Dan S."/>
            <person name="Kawaji K."/>
            <person name="Hayashi H."/>
            <person name="Kodama E.N."/>
            <person name="Hori A."/>
            <person name="Salim E."/>
            <person name="Kuraishi T."/>
            <person name="Hirata N."/>
            <person name="Kanda Y."/>
            <person name="Asai T."/>
        </authorList>
    </citation>
    <scope>FUNCTION</scope>
    <scope>PATHWAY</scope>
    <scope>BIOTECHNOLOGY</scope>
</reference>
<sequence>MAATKDRQLFRHLLRLSRFDRYNPLFTTFAGLWSTLLAGGAKMAEQRSDMSVATVFQQCALCFVASYLFCGAGMVWNDWIDRDIDANVARTKERPLASGKVTATEAMVWMVLQAALSWGVLEVMLDGKDVAKHFIPVAAASVLYPFGKRSLARMLGIYPQYILAFTIAWPAVIGRAAIYGQYESYAETLRQCLPLCTMVFFWTIYLNTAYSYQDVVDDRKLGVNSFYNIAGKHIHLLLVALVSPILVCLPIYLFELHSLWLWLSWMGVWTASLAQQLVQFDPKQPASGGSIHRSNFILGIWTILACVVQVFLTGSA</sequence>
<feature type="chain" id="PRO_0000451533" description="Polyprenyl transferase dpchC">
    <location>
        <begin position="1"/>
        <end position="316"/>
    </location>
</feature>
<feature type="transmembrane region" description="Helical" evidence="2">
    <location>
        <begin position="24"/>
        <end position="44"/>
    </location>
</feature>
<feature type="transmembrane region" description="Helical" evidence="2">
    <location>
        <begin position="60"/>
        <end position="80"/>
    </location>
</feature>
<feature type="transmembrane region" description="Helical" evidence="2">
    <location>
        <begin position="105"/>
        <end position="125"/>
    </location>
</feature>
<feature type="transmembrane region" description="Helical" evidence="2">
    <location>
        <begin position="154"/>
        <end position="174"/>
    </location>
</feature>
<feature type="transmembrane region" description="Helical" evidence="2">
    <location>
        <begin position="192"/>
        <end position="212"/>
    </location>
</feature>
<feature type="transmembrane region" description="Helical" evidence="2">
    <location>
        <begin position="234"/>
        <end position="254"/>
    </location>
</feature>
<feature type="transmembrane region" description="Helical" evidence="2">
    <location>
        <begin position="258"/>
        <end position="278"/>
    </location>
</feature>
<feature type="transmembrane region" description="Helical" evidence="2">
    <location>
        <begin position="296"/>
        <end position="316"/>
    </location>
</feature>
<accession>A0A1B7YCK2</accession>
<accession>H1VQB3</accession>
<organism>
    <name type="scientific">Colletotrichum higginsianum (strain IMI 349063)</name>
    <name type="common">Crucifer anthracnose fungus</name>
    <dbReference type="NCBI Taxonomy" id="759273"/>
    <lineage>
        <taxon>Eukaryota</taxon>
        <taxon>Fungi</taxon>
        <taxon>Dikarya</taxon>
        <taxon>Ascomycota</taxon>
        <taxon>Pezizomycotina</taxon>
        <taxon>Sordariomycetes</taxon>
        <taxon>Hypocreomycetidae</taxon>
        <taxon>Glomerellales</taxon>
        <taxon>Glomerellaceae</taxon>
        <taxon>Colletotrichum</taxon>
        <taxon>Colletotrichum destructivum species complex</taxon>
    </lineage>
</organism>
<protein>
    <recommendedName>
        <fullName evidence="4">Polyprenyl transferase dpchC</fullName>
        <ecNumber evidence="6">2.5.1.-</ecNumber>
    </recommendedName>
    <alternativeName>
        <fullName evidence="4">Diterpenoid pyrone biosynthesis cluster protein C</fullName>
    </alternativeName>
</protein>
<keyword id="KW-0472">Membrane</keyword>
<keyword id="KW-1185">Reference proteome</keyword>
<keyword id="KW-0808">Transferase</keyword>
<keyword id="KW-0812">Transmembrane</keyword>
<keyword id="KW-1133">Transmembrane helix</keyword>
<evidence type="ECO:0000250" key="1">
    <source>
        <dbReference type="UniProtKB" id="P32378"/>
    </source>
</evidence>
<evidence type="ECO:0000255" key="2"/>
<evidence type="ECO:0000269" key="3">
    <source>
    </source>
</evidence>
<evidence type="ECO:0000303" key="4">
    <source>
    </source>
</evidence>
<evidence type="ECO:0000305" key="5"/>
<evidence type="ECO:0000305" key="6">
    <source>
    </source>
</evidence>
<proteinExistence type="evidence at protein level"/>